<protein>
    <recommendedName>
        <fullName>RING-H2 finger protein ATL67</fullName>
        <ecNumber evidence="4">2.3.2.27</ecNumber>
    </recommendedName>
    <alternativeName>
        <fullName evidence="4">RING-type E3 ubiquitin transferase ATL67</fullName>
    </alternativeName>
</protein>
<accession>O82353</accession>
<comment type="catalytic activity">
    <reaction evidence="4">
        <text>S-ubiquitinyl-[E2 ubiquitin-conjugating enzyme]-L-cysteine + [acceptor protein]-L-lysine = [E2 ubiquitin-conjugating enzyme]-L-cysteine + N(6)-ubiquitinyl-[acceptor protein]-L-lysine.</text>
        <dbReference type="EC" id="2.3.2.27"/>
    </reaction>
</comment>
<comment type="pathway">
    <text>Protein modification; protein ubiquitination.</text>
</comment>
<comment type="subcellular location">
    <subcellularLocation>
        <location evidence="4">Membrane</location>
        <topology evidence="4">Single-pass membrane protein</topology>
    </subcellularLocation>
</comment>
<comment type="domain">
    <text evidence="1">The RING-type zinc finger domain mediates binding to an E2 ubiquitin-conjugating enzyme.</text>
</comment>
<comment type="similarity">
    <text evidence="4">Belongs to the RING-type zinc finger family. ATL subfamily.</text>
</comment>
<proteinExistence type="evidence at transcript level"/>
<organism>
    <name type="scientific">Arabidopsis thaliana</name>
    <name type="common">Mouse-ear cress</name>
    <dbReference type="NCBI Taxonomy" id="3702"/>
    <lineage>
        <taxon>Eukaryota</taxon>
        <taxon>Viridiplantae</taxon>
        <taxon>Streptophyta</taxon>
        <taxon>Embryophyta</taxon>
        <taxon>Tracheophyta</taxon>
        <taxon>Spermatophyta</taxon>
        <taxon>Magnoliopsida</taxon>
        <taxon>eudicotyledons</taxon>
        <taxon>Gunneridae</taxon>
        <taxon>Pentapetalae</taxon>
        <taxon>rosids</taxon>
        <taxon>malvids</taxon>
        <taxon>Brassicales</taxon>
        <taxon>Brassicaceae</taxon>
        <taxon>Camelineae</taxon>
        <taxon>Arabidopsis</taxon>
    </lineage>
</organism>
<reference key="1">
    <citation type="journal article" date="1999" name="Nature">
        <title>Sequence and analysis of chromosome 2 of the plant Arabidopsis thaliana.</title>
        <authorList>
            <person name="Lin X."/>
            <person name="Kaul S."/>
            <person name="Rounsley S.D."/>
            <person name="Shea T.P."/>
            <person name="Benito M.-I."/>
            <person name="Town C.D."/>
            <person name="Fujii C.Y."/>
            <person name="Mason T.M."/>
            <person name="Bowman C.L."/>
            <person name="Barnstead M.E."/>
            <person name="Feldblyum T.V."/>
            <person name="Buell C.R."/>
            <person name="Ketchum K.A."/>
            <person name="Lee J.J."/>
            <person name="Ronning C.M."/>
            <person name="Koo H.L."/>
            <person name="Moffat K.S."/>
            <person name="Cronin L.A."/>
            <person name="Shen M."/>
            <person name="Pai G."/>
            <person name="Van Aken S."/>
            <person name="Umayam L."/>
            <person name="Tallon L.J."/>
            <person name="Gill J.E."/>
            <person name="Adams M.D."/>
            <person name="Carrera A.J."/>
            <person name="Creasy T.H."/>
            <person name="Goodman H.M."/>
            <person name="Somerville C.R."/>
            <person name="Copenhaver G.P."/>
            <person name="Preuss D."/>
            <person name="Nierman W.C."/>
            <person name="White O."/>
            <person name="Eisen J.A."/>
            <person name="Salzberg S.L."/>
            <person name="Fraser C.M."/>
            <person name="Venter J.C."/>
        </authorList>
    </citation>
    <scope>NUCLEOTIDE SEQUENCE [LARGE SCALE GENOMIC DNA]</scope>
    <source>
        <strain>cv. Columbia</strain>
    </source>
</reference>
<reference key="2">
    <citation type="journal article" date="2017" name="Plant J.">
        <title>Araport11: a complete reannotation of the Arabidopsis thaliana reference genome.</title>
        <authorList>
            <person name="Cheng C.Y."/>
            <person name="Krishnakumar V."/>
            <person name="Chan A.P."/>
            <person name="Thibaud-Nissen F."/>
            <person name="Schobel S."/>
            <person name="Town C.D."/>
        </authorList>
    </citation>
    <scope>GENOME REANNOTATION</scope>
    <source>
        <strain>cv. Columbia</strain>
    </source>
</reference>
<reference key="3">
    <citation type="journal article" date="2003" name="Science">
        <title>Empirical analysis of transcriptional activity in the Arabidopsis genome.</title>
        <authorList>
            <person name="Yamada K."/>
            <person name="Lim J."/>
            <person name="Dale J.M."/>
            <person name="Chen H."/>
            <person name="Shinn P."/>
            <person name="Palm C.J."/>
            <person name="Southwick A.M."/>
            <person name="Wu H.C."/>
            <person name="Kim C.J."/>
            <person name="Nguyen M."/>
            <person name="Pham P.K."/>
            <person name="Cheuk R.F."/>
            <person name="Karlin-Newmann G."/>
            <person name="Liu S.X."/>
            <person name="Lam B."/>
            <person name="Sakano H."/>
            <person name="Wu T."/>
            <person name="Yu G."/>
            <person name="Miranda M."/>
            <person name="Quach H.L."/>
            <person name="Tripp M."/>
            <person name="Chang C.H."/>
            <person name="Lee J.M."/>
            <person name="Toriumi M.J."/>
            <person name="Chan M.M."/>
            <person name="Tang C.C."/>
            <person name="Onodera C.S."/>
            <person name="Deng J.M."/>
            <person name="Akiyama K."/>
            <person name="Ansari Y."/>
            <person name="Arakawa T."/>
            <person name="Banh J."/>
            <person name="Banno F."/>
            <person name="Bowser L."/>
            <person name="Brooks S.Y."/>
            <person name="Carninci P."/>
            <person name="Chao Q."/>
            <person name="Choy N."/>
            <person name="Enju A."/>
            <person name="Goldsmith A.D."/>
            <person name="Gurjal M."/>
            <person name="Hansen N.F."/>
            <person name="Hayashizaki Y."/>
            <person name="Johnson-Hopson C."/>
            <person name="Hsuan V.W."/>
            <person name="Iida K."/>
            <person name="Karnes M."/>
            <person name="Khan S."/>
            <person name="Koesema E."/>
            <person name="Ishida J."/>
            <person name="Jiang P.X."/>
            <person name="Jones T."/>
            <person name="Kawai J."/>
            <person name="Kamiya A."/>
            <person name="Meyers C."/>
            <person name="Nakajima M."/>
            <person name="Narusaka M."/>
            <person name="Seki M."/>
            <person name="Sakurai T."/>
            <person name="Satou M."/>
            <person name="Tamse R."/>
            <person name="Vaysberg M."/>
            <person name="Wallender E.K."/>
            <person name="Wong C."/>
            <person name="Yamamura Y."/>
            <person name="Yuan S."/>
            <person name="Shinozaki K."/>
            <person name="Davis R.W."/>
            <person name="Theologis A."/>
            <person name="Ecker J.R."/>
        </authorList>
    </citation>
    <scope>NUCLEOTIDE SEQUENCE [LARGE SCALE MRNA]</scope>
    <source>
        <strain>cv. Columbia</strain>
    </source>
</reference>
<reference key="4">
    <citation type="journal article" date="2002" name="Genome Biol.">
        <title>Evaluation and classification of RING-finger domains encoded by the Arabidopsis genome.</title>
        <authorList>
            <person name="Kosarev P."/>
            <person name="Mayer K.F.X."/>
            <person name="Hardtke C.S."/>
        </authorList>
    </citation>
    <scope>GENE FAMILY ORGANIZATION</scope>
</reference>
<reference key="5">
    <citation type="journal article" date="2006" name="J. Mol. Evol.">
        <title>The ATL gene family from Arabidopsis thaliana and Oryza sativa comprises a large number of putative ubiquitin ligases of the RING-H2 type.</title>
        <authorList>
            <person name="Serrano M."/>
            <person name="Parra S."/>
            <person name="Alcaraz L.D."/>
            <person name="Guzman P."/>
        </authorList>
    </citation>
    <scope>NOMENCLATURE</scope>
    <scope>GENE FAMILY ORGANIZATION</scope>
</reference>
<gene>
    <name type="primary">ATL67</name>
    <name type="ordered locus">At2g46160</name>
    <name type="ORF">T3F17.19</name>
</gene>
<keyword id="KW-0472">Membrane</keyword>
<keyword id="KW-0479">Metal-binding</keyword>
<keyword id="KW-1185">Reference proteome</keyword>
<keyword id="KW-0808">Transferase</keyword>
<keyword id="KW-0812">Transmembrane</keyword>
<keyword id="KW-1133">Transmembrane helix</keyword>
<keyword id="KW-0833">Ubl conjugation pathway</keyword>
<keyword id="KW-0862">Zinc</keyword>
<keyword id="KW-0863">Zinc-finger</keyword>
<evidence type="ECO:0000250" key="1"/>
<evidence type="ECO:0000255" key="2"/>
<evidence type="ECO:0000255" key="3">
    <source>
        <dbReference type="PROSITE-ProRule" id="PRU00175"/>
    </source>
</evidence>
<evidence type="ECO:0000305" key="4"/>
<feature type="chain" id="PRO_0000055785" description="RING-H2 finger protein ATL67">
    <location>
        <begin position="1"/>
        <end position="214"/>
    </location>
</feature>
<feature type="transmembrane region" description="Helical" evidence="2">
    <location>
        <begin position="33"/>
        <end position="53"/>
    </location>
</feature>
<feature type="zinc finger region" description="RING-type; atypical" evidence="3">
    <location>
        <begin position="138"/>
        <end position="180"/>
    </location>
</feature>
<dbReference type="EC" id="2.3.2.27" evidence="4"/>
<dbReference type="EMBL" id="AC005397">
    <property type="protein sequence ID" value="AAC62890.1"/>
    <property type="molecule type" value="Genomic_DNA"/>
</dbReference>
<dbReference type="EMBL" id="CP002685">
    <property type="protein sequence ID" value="AEC10650.1"/>
    <property type="molecule type" value="Genomic_DNA"/>
</dbReference>
<dbReference type="EMBL" id="CP002685">
    <property type="protein sequence ID" value="ANM62097.1"/>
    <property type="molecule type" value="Genomic_DNA"/>
</dbReference>
<dbReference type="EMBL" id="AY074641">
    <property type="protein sequence ID" value="AAL69457.1"/>
    <property type="molecule type" value="mRNA"/>
</dbReference>
<dbReference type="PIR" id="D84899">
    <property type="entry name" value="D84899"/>
</dbReference>
<dbReference type="RefSeq" id="NP_001324277.1">
    <property type="nucleotide sequence ID" value="NM_001337178.1"/>
</dbReference>
<dbReference type="RefSeq" id="NP_182139.1">
    <property type="nucleotide sequence ID" value="NM_130178.4"/>
</dbReference>
<dbReference type="SMR" id="O82353"/>
<dbReference type="BioGRID" id="4558">
    <property type="interactions" value="2"/>
</dbReference>
<dbReference type="IntAct" id="O82353">
    <property type="interactions" value="2"/>
</dbReference>
<dbReference type="GlyGen" id="O82353">
    <property type="glycosylation" value="1 site"/>
</dbReference>
<dbReference type="PaxDb" id="3702-AT2G46160.1"/>
<dbReference type="EnsemblPlants" id="AT2G46160.1">
    <property type="protein sequence ID" value="AT2G46160.1"/>
    <property type="gene ID" value="AT2G46160"/>
</dbReference>
<dbReference type="EnsemblPlants" id="AT2G46160.2">
    <property type="protein sequence ID" value="AT2G46160.2"/>
    <property type="gene ID" value="AT2G46160"/>
</dbReference>
<dbReference type="GeneID" id="819223"/>
<dbReference type="Gramene" id="AT2G46160.1">
    <property type="protein sequence ID" value="AT2G46160.1"/>
    <property type="gene ID" value="AT2G46160"/>
</dbReference>
<dbReference type="Gramene" id="AT2G46160.2">
    <property type="protein sequence ID" value="AT2G46160.2"/>
    <property type="gene ID" value="AT2G46160"/>
</dbReference>
<dbReference type="KEGG" id="ath:AT2G46160"/>
<dbReference type="Araport" id="AT2G46160"/>
<dbReference type="TAIR" id="AT2G46160">
    <property type="gene designation" value="ATL67"/>
</dbReference>
<dbReference type="eggNOG" id="KOG0800">
    <property type="taxonomic scope" value="Eukaryota"/>
</dbReference>
<dbReference type="HOGENOM" id="CLU_013137_15_4_1"/>
<dbReference type="InParanoid" id="O82353"/>
<dbReference type="OMA" id="SYICCRG"/>
<dbReference type="OrthoDB" id="8062037at2759"/>
<dbReference type="PhylomeDB" id="O82353"/>
<dbReference type="UniPathway" id="UPA00143"/>
<dbReference type="PRO" id="PR:O82353"/>
<dbReference type="Proteomes" id="UP000006548">
    <property type="component" value="Chromosome 2"/>
</dbReference>
<dbReference type="ExpressionAtlas" id="O82353">
    <property type="expression patterns" value="baseline and differential"/>
</dbReference>
<dbReference type="GO" id="GO:0016020">
    <property type="term" value="C:membrane"/>
    <property type="evidence" value="ECO:0007669"/>
    <property type="project" value="UniProtKB-SubCell"/>
</dbReference>
<dbReference type="GO" id="GO:0016740">
    <property type="term" value="F:transferase activity"/>
    <property type="evidence" value="ECO:0007669"/>
    <property type="project" value="UniProtKB-KW"/>
</dbReference>
<dbReference type="GO" id="GO:0008270">
    <property type="term" value="F:zinc ion binding"/>
    <property type="evidence" value="ECO:0007669"/>
    <property type="project" value="UniProtKB-KW"/>
</dbReference>
<dbReference type="GO" id="GO:0016567">
    <property type="term" value="P:protein ubiquitination"/>
    <property type="evidence" value="ECO:0007669"/>
    <property type="project" value="UniProtKB-UniPathway"/>
</dbReference>
<dbReference type="Gene3D" id="3.30.40.10">
    <property type="entry name" value="Zinc/RING finger domain, C3HC4 (zinc finger)"/>
    <property type="match status" value="1"/>
</dbReference>
<dbReference type="InterPro" id="IPR044289">
    <property type="entry name" value="ATL67-70"/>
</dbReference>
<dbReference type="InterPro" id="IPR001841">
    <property type="entry name" value="Znf_RING"/>
</dbReference>
<dbReference type="InterPro" id="IPR013083">
    <property type="entry name" value="Znf_RING/FYVE/PHD"/>
</dbReference>
<dbReference type="PANTHER" id="PTHR46592">
    <property type="entry name" value="RING-H2 FINGER PROTEIN ATL67"/>
    <property type="match status" value="1"/>
</dbReference>
<dbReference type="PANTHER" id="PTHR46592:SF6">
    <property type="entry name" value="RING-H2 FINGER PROTEIN ATL67"/>
    <property type="match status" value="1"/>
</dbReference>
<dbReference type="Pfam" id="PF13639">
    <property type="entry name" value="zf-RING_2"/>
    <property type="match status" value="1"/>
</dbReference>
<dbReference type="SMART" id="SM00184">
    <property type="entry name" value="RING"/>
    <property type="match status" value="1"/>
</dbReference>
<dbReference type="SUPFAM" id="SSF57850">
    <property type="entry name" value="RING/U-box"/>
    <property type="match status" value="1"/>
</dbReference>
<dbReference type="PROSITE" id="PS50089">
    <property type="entry name" value="ZF_RING_2"/>
    <property type="match status" value="1"/>
</dbReference>
<sequence length="214" mass="23097">MSTLASSASVFLVHPPLPPSPPQAGNHSYLTTLGFGYSIAIALGFLVLLSTVLLSSYICCRDSRRRTTAVESTGDRGGSVILPRIIFVAEEDNEDLEAGDVVVGLDQAVINSYPKFHFSKDTSAASSDGFGGGGDTTCSICLCEYKEAEMLRMMPECKHYFHLCCLDAWLKLNGSCPVCRNSPLPTPTSTPLSTPLSEVVPLSQYAADRRRARR</sequence>
<name>ATL67_ARATH</name>